<sequence length="72" mass="8373">MSKEDMIEFSGTVTELLPNAMFRVKLDNEHMILAHTSGKMRKNRIRVLAGDRVNVEMTPYDLSKGRITFRFK</sequence>
<accession>A9HFM1</accession>
<accession>B5ZE13</accession>
<name>IF1_GLUDA</name>
<evidence type="ECO:0000255" key="1">
    <source>
        <dbReference type="HAMAP-Rule" id="MF_00075"/>
    </source>
</evidence>
<comment type="function">
    <text evidence="1">One of the essential components for the initiation of protein synthesis. Stabilizes the binding of IF-2 and IF-3 on the 30S subunit to which N-formylmethionyl-tRNA(fMet) subsequently binds. Helps modulate mRNA selection, yielding the 30S pre-initiation complex (PIC). Upon addition of the 50S ribosomal subunit IF-1, IF-2 and IF-3 are released leaving the mature 70S translation initiation complex.</text>
</comment>
<comment type="subunit">
    <text evidence="1">Component of the 30S ribosomal translation pre-initiation complex which assembles on the 30S ribosome in the order IF-2 and IF-3, IF-1 and N-formylmethionyl-tRNA(fMet); mRNA recruitment can occur at any time during PIC assembly.</text>
</comment>
<comment type="subcellular location">
    <subcellularLocation>
        <location evidence="1">Cytoplasm</location>
    </subcellularLocation>
</comment>
<comment type="similarity">
    <text evidence="1">Belongs to the IF-1 family.</text>
</comment>
<proteinExistence type="inferred from homology"/>
<reference key="1">
    <citation type="journal article" date="2009" name="BMC Genomics">
        <title>Complete genome sequence of the sugarcane nitrogen-fixing endophyte Gluconacetobacter diazotrophicus Pal5.</title>
        <authorList>
            <person name="Bertalan M."/>
            <person name="Albano R."/>
            <person name="de Padua V."/>
            <person name="Rouws L."/>
            <person name="Rojas C."/>
            <person name="Hemerly A."/>
            <person name="Teixeira K."/>
            <person name="Schwab S."/>
            <person name="Araujo J."/>
            <person name="Oliveira A."/>
            <person name="Franca L."/>
            <person name="Magalhaes V."/>
            <person name="Alqueres S."/>
            <person name="Cardoso A."/>
            <person name="Almeida W."/>
            <person name="Loureiro M.M."/>
            <person name="Nogueira E."/>
            <person name="Cidade D."/>
            <person name="Oliveira D."/>
            <person name="Simao T."/>
            <person name="Macedo J."/>
            <person name="Valadao A."/>
            <person name="Dreschsel M."/>
            <person name="Freitas F."/>
            <person name="Vidal M."/>
            <person name="Guedes H."/>
            <person name="Rodrigues E."/>
            <person name="Meneses C."/>
            <person name="Brioso P."/>
            <person name="Pozzer L."/>
            <person name="Figueiredo D."/>
            <person name="Montano H."/>
            <person name="Junior J."/>
            <person name="de Souza Filho G."/>
            <person name="Martin Quintana Flores V."/>
            <person name="Ferreira B."/>
            <person name="Branco A."/>
            <person name="Gonzalez P."/>
            <person name="Guillobel H."/>
            <person name="Lemos M."/>
            <person name="Seibel L."/>
            <person name="Macedo J."/>
            <person name="Alves-Ferreira M."/>
            <person name="Sachetto-Martins G."/>
            <person name="Coelho A."/>
            <person name="Santos E."/>
            <person name="Amaral G."/>
            <person name="Neves A."/>
            <person name="Pacheco A.B."/>
            <person name="Carvalho D."/>
            <person name="Lery L."/>
            <person name="Bisch P."/>
            <person name="Rossle S.C."/>
            <person name="Urmenyi T."/>
            <person name="Rael Pereira A."/>
            <person name="Silva R."/>
            <person name="Rondinelli E."/>
            <person name="von Kruger W."/>
            <person name="Martins O."/>
            <person name="Baldani J.I."/>
            <person name="Ferreira P.C."/>
        </authorList>
    </citation>
    <scope>NUCLEOTIDE SEQUENCE [LARGE SCALE GENOMIC DNA]</scope>
    <source>
        <strain>ATCC 49037 / DSM 5601 / CCUG 37298 / CIP 103539 / LMG 7603 / PAl5</strain>
    </source>
</reference>
<reference key="2">
    <citation type="journal article" date="2010" name="Stand. Genomic Sci.">
        <title>Two genome sequences of the same bacterial strain, Gluconacetobacter diazotrophicus PAl 5, suggest a new standard in genome sequence submission.</title>
        <authorList>
            <person name="Giongo A."/>
            <person name="Tyler H.L."/>
            <person name="Zipperer U.N."/>
            <person name="Triplett E.W."/>
        </authorList>
    </citation>
    <scope>NUCLEOTIDE SEQUENCE [LARGE SCALE GENOMIC DNA]</scope>
    <source>
        <strain>ATCC 49037 / DSM 5601 / CCUG 37298 / CIP 103539 / LMG 7603 / PAl5</strain>
    </source>
</reference>
<gene>
    <name evidence="1" type="primary">infA</name>
    <name type="ordered locus">GDI1439</name>
    <name type="ordered locus">Gdia_2139</name>
</gene>
<feature type="chain" id="PRO_0000338833" description="Translation initiation factor IF-1">
    <location>
        <begin position="1"/>
        <end position="72"/>
    </location>
</feature>
<feature type="domain" description="S1-like" evidence="1">
    <location>
        <begin position="1"/>
        <end position="72"/>
    </location>
</feature>
<protein>
    <recommendedName>
        <fullName evidence="1">Translation initiation factor IF-1</fullName>
    </recommendedName>
</protein>
<dbReference type="EMBL" id="AM889285">
    <property type="protein sequence ID" value="CAP55382.1"/>
    <property type="molecule type" value="Genomic_DNA"/>
</dbReference>
<dbReference type="EMBL" id="CP001189">
    <property type="protein sequence ID" value="ACI51897.1"/>
    <property type="molecule type" value="Genomic_DNA"/>
</dbReference>
<dbReference type="RefSeq" id="WP_003622234.1">
    <property type="nucleotide sequence ID" value="NC_011365.1"/>
</dbReference>
<dbReference type="SMR" id="A9HFM1"/>
<dbReference type="STRING" id="272568.GDI1439"/>
<dbReference type="GeneID" id="95616203"/>
<dbReference type="KEGG" id="gdi:GDI1439"/>
<dbReference type="KEGG" id="gdj:Gdia_2139"/>
<dbReference type="eggNOG" id="COG0361">
    <property type="taxonomic scope" value="Bacteria"/>
</dbReference>
<dbReference type="HOGENOM" id="CLU_151267_1_0_5"/>
<dbReference type="OrthoDB" id="9803250at2"/>
<dbReference type="Proteomes" id="UP000001176">
    <property type="component" value="Chromosome"/>
</dbReference>
<dbReference type="GO" id="GO:0005829">
    <property type="term" value="C:cytosol"/>
    <property type="evidence" value="ECO:0007669"/>
    <property type="project" value="TreeGrafter"/>
</dbReference>
<dbReference type="GO" id="GO:0043022">
    <property type="term" value="F:ribosome binding"/>
    <property type="evidence" value="ECO:0007669"/>
    <property type="project" value="UniProtKB-UniRule"/>
</dbReference>
<dbReference type="GO" id="GO:0019843">
    <property type="term" value="F:rRNA binding"/>
    <property type="evidence" value="ECO:0007669"/>
    <property type="project" value="UniProtKB-UniRule"/>
</dbReference>
<dbReference type="GO" id="GO:0003743">
    <property type="term" value="F:translation initiation factor activity"/>
    <property type="evidence" value="ECO:0007669"/>
    <property type="project" value="UniProtKB-UniRule"/>
</dbReference>
<dbReference type="CDD" id="cd04451">
    <property type="entry name" value="S1_IF1"/>
    <property type="match status" value="1"/>
</dbReference>
<dbReference type="FunFam" id="2.40.50.140:FF:000002">
    <property type="entry name" value="Translation initiation factor IF-1"/>
    <property type="match status" value="1"/>
</dbReference>
<dbReference type="Gene3D" id="2.40.50.140">
    <property type="entry name" value="Nucleic acid-binding proteins"/>
    <property type="match status" value="1"/>
</dbReference>
<dbReference type="HAMAP" id="MF_00075">
    <property type="entry name" value="IF_1"/>
    <property type="match status" value="1"/>
</dbReference>
<dbReference type="InterPro" id="IPR012340">
    <property type="entry name" value="NA-bd_OB-fold"/>
</dbReference>
<dbReference type="InterPro" id="IPR006196">
    <property type="entry name" value="RNA-binding_domain_S1_IF1"/>
</dbReference>
<dbReference type="InterPro" id="IPR003029">
    <property type="entry name" value="S1_domain"/>
</dbReference>
<dbReference type="InterPro" id="IPR004368">
    <property type="entry name" value="TIF_IF1"/>
</dbReference>
<dbReference type="NCBIfam" id="TIGR00008">
    <property type="entry name" value="infA"/>
    <property type="match status" value="1"/>
</dbReference>
<dbReference type="PANTHER" id="PTHR33370">
    <property type="entry name" value="TRANSLATION INITIATION FACTOR IF-1, CHLOROPLASTIC"/>
    <property type="match status" value="1"/>
</dbReference>
<dbReference type="PANTHER" id="PTHR33370:SF1">
    <property type="entry name" value="TRANSLATION INITIATION FACTOR IF-1, CHLOROPLASTIC"/>
    <property type="match status" value="1"/>
</dbReference>
<dbReference type="Pfam" id="PF01176">
    <property type="entry name" value="eIF-1a"/>
    <property type="match status" value="1"/>
</dbReference>
<dbReference type="SMART" id="SM00316">
    <property type="entry name" value="S1"/>
    <property type="match status" value="1"/>
</dbReference>
<dbReference type="SUPFAM" id="SSF50249">
    <property type="entry name" value="Nucleic acid-binding proteins"/>
    <property type="match status" value="1"/>
</dbReference>
<dbReference type="PROSITE" id="PS50832">
    <property type="entry name" value="S1_IF1_TYPE"/>
    <property type="match status" value="1"/>
</dbReference>
<keyword id="KW-0963">Cytoplasm</keyword>
<keyword id="KW-0396">Initiation factor</keyword>
<keyword id="KW-0648">Protein biosynthesis</keyword>
<keyword id="KW-1185">Reference proteome</keyword>
<keyword id="KW-0694">RNA-binding</keyword>
<keyword id="KW-0699">rRNA-binding</keyword>
<organism>
    <name type="scientific">Gluconacetobacter diazotrophicus (strain ATCC 49037 / DSM 5601 / CCUG 37298 / CIP 103539 / LMG 7603 / PAl5)</name>
    <dbReference type="NCBI Taxonomy" id="272568"/>
    <lineage>
        <taxon>Bacteria</taxon>
        <taxon>Pseudomonadati</taxon>
        <taxon>Pseudomonadota</taxon>
        <taxon>Alphaproteobacteria</taxon>
        <taxon>Acetobacterales</taxon>
        <taxon>Acetobacteraceae</taxon>
        <taxon>Gluconacetobacter</taxon>
    </lineage>
</organism>